<organism>
    <name type="scientific">Arabidopsis thaliana</name>
    <name type="common">Mouse-ear cress</name>
    <dbReference type="NCBI Taxonomy" id="3702"/>
    <lineage>
        <taxon>Eukaryota</taxon>
        <taxon>Viridiplantae</taxon>
        <taxon>Streptophyta</taxon>
        <taxon>Embryophyta</taxon>
        <taxon>Tracheophyta</taxon>
        <taxon>Spermatophyta</taxon>
        <taxon>Magnoliopsida</taxon>
        <taxon>eudicotyledons</taxon>
        <taxon>Gunneridae</taxon>
        <taxon>Pentapetalae</taxon>
        <taxon>rosids</taxon>
        <taxon>malvids</taxon>
        <taxon>Brassicales</taxon>
        <taxon>Brassicaceae</taxon>
        <taxon>Camelineae</taxon>
        <taxon>Arabidopsis</taxon>
    </lineage>
</organism>
<evidence type="ECO:0000250" key="1"/>
<evidence type="ECO:0000255" key="2"/>
<evidence type="ECO:0000305" key="3"/>
<reference key="1">
    <citation type="journal article" date="2003" name="Plant Physiol.">
        <title>Expression profiling and bioinformatic analyses of a novel stress-regulated multispanning transmembrane protein family from cereals and Arabidopsis.</title>
        <authorList>
            <person name="Breton G."/>
            <person name="Danyluk J."/>
            <person name="Charron J.-B.F."/>
            <person name="Sarhan F."/>
        </authorList>
    </citation>
    <scope>NUCLEOTIDE SEQUENCE [MRNA]</scope>
    <scope>GENE FAMILY</scope>
    <scope>NOMENCLATURE</scope>
    <source>
        <strain>cv. Columbia</strain>
    </source>
</reference>
<reference key="2">
    <citation type="journal article" date="2000" name="Nature">
        <title>Sequence and analysis of chromosome 3 of the plant Arabidopsis thaliana.</title>
        <authorList>
            <person name="Salanoubat M."/>
            <person name="Lemcke K."/>
            <person name="Rieger M."/>
            <person name="Ansorge W."/>
            <person name="Unseld M."/>
            <person name="Fartmann B."/>
            <person name="Valle G."/>
            <person name="Bloecker H."/>
            <person name="Perez-Alonso M."/>
            <person name="Obermaier B."/>
            <person name="Delseny M."/>
            <person name="Boutry M."/>
            <person name="Grivell L.A."/>
            <person name="Mache R."/>
            <person name="Puigdomenech P."/>
            <person name="De Simone V."/>
            <person name="Choisne N."/>
            <person name="Artiguenave F."/>
            <person name="Robert C."/>
            <person name="Brottier P."/>
            <person name="Wincker P."/>
            <person name="Cattolico L."/>
            <person name="Weissenbach J."/>
            <person name="Saurin W."/>
            <person name="Quetier F."/>
            <person name="Schaefer M."/>
            <person name="Mueller-Auer S."/>
            <person name="Gabel C."/>
            <person name="Fuchs M."/>
            <person name="Benes V."/>
            <person name="Wurmbach E."/>
            <person name="Drzonek H."/>
            <person name="Erfle H."/>
            <person name="Jordan N."/>
            <person name="Bangert S."/>
            <person name="Wiedelmann R."/>
            <person name="Kranz H."/>
            <person name="Voss H."/>
            <person name="Holland R."/>
            <person name="Brandt P."/>
            <person name="Nyakatura G."/>
            <person name="Vezzi A."/>
            <person name="D'Angelo M."/>
            <person name="Pallavicini A."/>
            <person name="Toppo S."/>
            <person name="Simionati B."/>
            <person name="Conrad A."/>
            <person name="Hornischer K."/>
            <person name="Kauer G."/>
            <person name="Loehnert T.-H."/>
            <person name="Nordsiek G."/>
            <person name="Reichelt J."/>
            <person name="Scharfe M."/>
            <person name="Schoen O."/>
            <person name="Bargues M."/>
            <person name="Terol J."/>
            <person name="Climent J."/>
            <person name="Navarro P."/>
            <person name="Collado C."/>
            <person name="Perez-Perez A."/>
            <person name="Ottenwaelder B."/>
            <person name="Duchemin D."/>
            <person name="Cooke R."/>
            <person name="Laudie M."/>
            <person name="Berger-Llauro C."/>
            <person name="Purnelle B."/>
            <person name="Masuy D."/>
            <person name="de Haan M."/>
            <person name="Maarse A.C."/>
            <person name="Alcaraz J.-P."/>
            <person name="Cottet A."/>
            <person name="Casacuberta E."/>
            <person name="Monfort A."/>
            <person name="Argiriou A."/>
            <person name="Flores M."/>
            <person name="Liguori R."/>
            <person name="Vitale D."/>
            <person name="Mannhaupt G."/>
            <person name="Haase D."/>
            <person name="Schoof H."/>
            <person name="Rudd S."/>
            <person name="Zaccaria P."/>
            <person name="Mewes H.-W."/>
            <person name="Mayer K.F.X."/>
            <person name="Kaul S."/>
            <person name="Town C.D."/>
            <person name="Koo H.L."/>
            <person name="Tallon L.J."/>
            <person name="Jenkins J."/>
            <person name="Rooney T."/>
            <person name="Rizzo M."/>
            <person name="Walts A."/>
            <person name="Utterback T."/>
            <person name="Fujii C.Y."/>
            <person name="Shea T.P."/>
            <person name="Creasy T.H."/>
            <person name="Haas B."/>
            <person name="Maiti R."/>
            <person name="Wu D."/>
            <person name="Peterson J."/>
            <person name="Van Aken S."/>
            <person name="Pai G."/>
            <person name="Militscher J."/>
            <person name="Sellers P."/>
            <person name="Gill J.E."/>
            <person name="Feldblyum T.V."/>
            <person name="Preuss D."/>
            <person name="Lin X."/>
            <person name="Nierman W.C."/>
            <person name="Salzberg S.L."/>
            <person name="White O."/>
            <person name="Venter J.C."/>
            <person name="Fraser C.M."/>
            <person name="Kaneko T."/>
            <person name="Nakamura Y."/>
            <person name="Sato S."/>
            <person name="Kato T."/>
            <person name="Asamizu E."/>
            <person name="Sasamoto S."/>
            <person name="Kimura T."/>
            <person name="Idesawa K."/>
            <person name="Kawashima K."/>
            <person name="Kishida Y."/>
            <person name="Kiyokawa C."/>
            <person name="Kohara M."/>
            <person name="Matsumoto M."/>
            <person name="Matsuno A."/>
            <person name="Muraki A."/>
            <person name="Nakayama S."/>
            <person name="Nakazaki N."/>
            <person name="Shinpo S."/>
            <person name="Takeuchi C."/>
            <person name="Wada T."/>
            <person name="Watanabe A."/>
            <person name="Yamada M."/>
            <person name="Yasuda M."/>
            <person name="Tabata S."/>
        </authorList>
    </citation>
    <scope>NUCLEOTIDE SEQUENCE [LARGE SCALE GENOMIC DNA]</scope>
    <source>
        <strain>cv. Columbia</strain>
    </source>
</reference>
<reference key="3">
    <citation type="journal article" date="2017" name="Plant J.">
        <title>Araport11: a complete reannotation of the Arabidopsis thaliana reference genome.</title>
        <authorList>
            <person name="Cheng C.Y."/>
            <person name="Krishnakumar V."/>
            <person name="Chan A.P."/>
            <person name="Thibaud-Nissen F."/>
            <person name="Schobel S."/>
            <person name="Town C.D."/>
        </authorList>
    </citation>
    <scope>GENOME REANNOTATION</scope>
    <source>
        <strain>cv. Columbia</strain>
    </source>
</reference>
<reference key="4">
    <citation type="journal article" date="2003" name="Science">
        <title>Empirical analysis of transcriptional activity in the Arabidopsis genome.</title>
        <authorList>
            <person name="Yamada K."/>
            <person name="Lim J."/>
            <person name="Dale J.M."/>
            <person name="Chen H."/>
            <person name="Shinn P."/>
            <person name="Palm C.J."/>
            <person name="Southwick A.M."/>
            <person name="Wu H.C."/>
            <person name="Kim C.J."/>
            <person name="Nguyen M."/>
            <person name="Pham P.K."/>
            <person name="Cheuk R.F."/>
            <person name="Karlin-Newmann G."/>
            <person name="Liu S.X."/>
            <person name="Lam B."/>
            <person name="Sakano H."/>
            <person name="Wu T."/>
            <person name="Yu G."/>
            <person name="Miranda M."/>
            <person name="Quach H.L."/>
            <person name="Tripp M."/>
            <person name="Chang C.H."/>
            <person name="Lee J.M."/>
            <person name="Toriumi M.J."/>
            <person name="Chan M.M."/>
            <person name="Tang C.C."/>
            <person name="Onodera C.S."/>
            <person name="Deng J.M."/>
            <person name="Akiyama K."/>
            <person name="Ansari Y."/>
            <person name="Arakawa T."/>
            <person name="Banh J."/>
            <person name="Banno F."/>
            <person name="Bowser L."/>
            <person name="Brooks S.Y."/>
            <person name="Carninci P."/>
            <person name="Chao Q."/>
            <person name="Choy N."/>
            <person name="Enju A."/>
            <person name="Goldsmith A.D."/>
            <person name="Gurjal M."/>
            <person name="Hansen N.F."/>
            <person name="Hayashizaki Y."/>
            <person name="Johnson-Hopson C."/>
            <person name="Hsuan V.W."/>
            <person name="Iida K."/>
            <person name="Karnes M."/>
            <person name="Khan S."/>
            <person name="Koesema E."/>
            <person name="Ishida J."/>
            <person name="Jiang P.X."/>
            <person name="Jones T."/>
            <person name="Kawai J."/>
            <person name="Kamiya A."/>
            <person name="Meyers C."/>
            <person name="Nakajima M."/>
            <person name="Narusaka M."/>
            <person name="Seki M."/>
            <person name="Sakurai T."/>
            <person name="Satou M."/>
            <person name="Tamse R."/>
            <person name="Vaysberg M."/>
            <person name="Wallender E.K."/>
            <person name="Wong C."/>
            <person name="Yamamura Y."/>
            <person name="Yuan S."/>
            <person name="Shinozaki K."/>
            <person name="Davis R.W."/>
            <person name="Theologis A."/>
            <person name="Ecker J.R."/>
        </authorList>
    </citation>
    <scope>NUCLEOTIDE SEQUENCE [LARGE SCALE MRNA]</scope>
    <source>
        <strain>cv. Columbia</strain>
    </source>
</reference>
<keyword id="KW-1003">Cell membrane</keyword>
<keyword id="KW-0472">Membrane</keyword>
<keyword id="KW-1185">Reference proteome</keyword>
<keyword id="KW-0812">Transmembrane</keyword>
<keyword id="KW-1133">Transmembrane helix</keyword>
<name>CRPM2_ARATH</name>
<gene>
    <name type="primary">COR413PM2</name>
    <name type="ordered locus">At3g50830</name>
    <name type="ORF">F18B3.110</name>
</gene>
<feature type="chain" id="PRO_0000420441" description="Cold-regulated 413 plasma membrane protein 2">
    <location>
        <begin position="1"/>
        <end position="203"/>
    </location>
</feature>
<feature type="topological domain" description="Extracellular" evidence="2">
    <location>
        <begin position="1"/>
        <end position="43"/>
    </location>
</feature>
<feature type="transmembrane region" description="Helical" evidence="2">
    <location>
        <begin position="44"/>
        <end position="64"/>
    </location>
</feature>
<feature type="topological domain" description="Cytoplasmic" evidence="2">
    <location>
        <begin position="65"/>
        <end position="74"/>
    </location>
</feature>
<feature type="transmembrane region" description="Helical" evidence="2">
    <location>
        <begin position="75"/>
        <end position="95"/>
    </location>
</feature>
<feature type="topological domain" description="Extracellular" evidence="2">
    <location>
        <begin position="96"/>
        <end position="98"/>
    </location>
</feature>
<feature type="transmembrane region" description="Helical" evidence="2">
    <location>
        <begin position="99"/>
        <end position="119"/>
    </location>
</feature>
<feature type="topological domain" description="Cytoplasmic" evidence="2">
    <location>
        <position position="120"/>
    </location>
</feature>
<feature type="transmembrane region" description="Helical" evidence="2">
    <location>
        <begin position="121"/>
        <end position="141"/>
    </location>
</feature>
<feature type="topological domain" description="Extracellular" evidence="2">
    <location>
        <begin position="142"/>
        <end position="144"/>
    </location>
</feature>
<feature type="transmembrane region" description="Helical" evidence="2">
    <location>
        <begin position="145"/>
        <end position="165"/>
    </location>
</feature>
<feature type="topological domain" description="Cytoplasmic" evidence="2">
    <location>
        <begin position="166"/>
        <end position="179"/>
    </location>
</feature>
<feature type="transmembrane region" description="Helical" evidence="2">
    <location>
        <begin position="180"/>
        <end position="200"/>
    </location>
</feature>
<feature type="topological domain" description="Extracellular" evidence="2">
    <location>
        <begin position="201"/>
        <end position="203"/>
    </location>
</feature>
<proteinExistence type="evidence at transcript level"/>
<sequence>MGRMDYLAMKTDDVDTVALVNSDMEELKVAAKKLFSDVSKLGGLGFGVSFLKFLASFAAIYLLILDRTNWKTKMLTSLLIPYIFLSLPSVIFNFLSGDVGKWIAFVAVVLRLFFPKHFPDWLEMPGSLILLLVVSPHFLAHHIRGTWIGTVISLFIGCYLLQEHIRASGGFRNSFTQPRGVSNTLGIILLLVYPVWALIVRVM</sequence>
<dbReference type="EMBL" id="AF283005">
    <property type="protein sequence ID" value="AAG13394.1"/>
    <property type="molecule type" value="mRNA"/>
</dbReference>
<dbReference type="EMBL" id="AL049862">
    <property type="protein sequence ID" value="CAB42912.1"/>
    <property type="molecule type" value="Genomic_DNA"/>
</dbReference>
<dbReference type="EMBL" id="CP002686">
    <property type="protein sequence ID" value="AEE78715.1"/>
    <property type="molecule type" value="Genomic_DNA"/>
</dbReference>
<dbReference type="EMBL" id="AF360305">
    <property type="protein sequence ID" value="AAK26015.1"/>
    <property type="molecule type" value="mRNA"/>
</dbReference>
<dbReference type="EMBL" id="AY056356">
    <property type="protein sequence ID" value="AAL07242.1"/>
    <property type="molecule type" value="mRNA"/>
</dbReference>
<dbReference type="PIR" id="T08404">
    <property type="entry name" value="T08404"/>
</dbReference>
<dbReference type="BioGRID" id="9565">
    <property type="interactions" value="3"/>
</dbReference>
<dbReference type="FunCoup" id="Q9SVL6">
    <property type="interactions" value="560"/>
</dbReference>
<dbReference type="IntAct" id="Q9SVL6">
    <property type="interactions" value="3"/>
</dbReference>
<dbReference type="STRING" id="3702.Q9SVL6"/>
<dbReference type="PaxDb" id="3702-AT3G50830.1"/>
<dbReference type="ProteomicsDB" id="220343"/>
<dbReference type="EnsemblPlants" id="AT3G50830.1">
    <property type="protein sequence ID" value="AT3G50830.1"/>
    <property type="gene ID" value="AT3G50830"/>
</dbReference>
<dbReference type="Gramene" id="AT3G50830.1">
    <property type="protein sequence ID" value="AT3G50830.1"/>
    <property type="gene ID" value="AT3G50830"/>
</dbReference>
<dbReference type="KEGG" id="ath:AT3G50830"/>
<dbReference type="Araport" id="AT3G50830"/>
<dbReference type="TAIR" id="AT3G50830">
    <property type="gene designation" value="COR413-PM2"/>
</dbReference>
<dbReference type="eggNOG" id="ENOG502QQY4">
    <property type="taxonomic scope" value="Eukaryota"/>
</dbReference>
<dbReference type="HOGENOM" id="CLU_081976_1_0_1"/>
<dbReference type="InParanoid" id="Q9SVL6"/>
<dbReference type="OMA" id="KWFASFA"/>
<dbReference type="PhylomeDB" id="Q9SVL6"/>
<dbReference type="PRO" id="PR:Q9SVL6"/>
<dbReference type="Proteomes" id="UP000006548">
    <property type="component" value="Chromosome 3"/>
</dbReference>
<dbReference type="ExpressionAtlas" id="Q9SVL6">
    <property type="expression patterns" value="baseline and differential"/>
</dbReference>
<dbReference type="GO" id="GO:0000325">
    <property type="term" value="C:plant-type vacuole"/>
    <property type="evidence" value="ECO:0007005"/>
    <property type="project" value="TAIR"/>
</dbReference>
<dbReference type="GO" id="GO:0005886">
    <property type="term" value="C:plasma membrane"/>
    <property type="evidence" value="ECO:0000250"/>
    <property type="project" value="TAIR"/>
</dbReference>
<dbReference type="InterPro" id="IPR008892">
    <property type="entry name" value="COR413"/>
</dbReference>
<dbReference type="PANTHER" id="PTHR33596">
    <property type="entry name" value="COLD-REGULATED 413 PLASMA MEMBRANE PROTEIN 2"/>
    <property type="match status" value="1"/>
</dbReference>
<dbReference type="PANTHER" id="PTHR33596:SF23">
    <property type="entry name" value="COLD-REGULATED 413 PLASMA MEMBRANE PROTEIN 2"/>
    <property type="match status" value="1"/>
</dbReference>
<dbReference type="Pfam" id="PF05562">
    <property type="entry name" value="WCOR413"/>
    <property type="match status" value="1"/>
</dbReference>
<protein>
    <recommendedName>
        <fullName>Cold-regulated 413 plasma membrane protein 2</fullName>
        <shortName>AtCOR413-PM2</shortName>
    </recommendedName>
</protein>
<accession>Q9SVL6</accession>
<comment type="subcellular location">
    <subcellularLocation>
        <location evidence="1">Cell membrane</location>
        <topology evidence="1">Multi-pass membrane protein</topology>
    </subcellularLocation>
</comment>
<comment type="similarity">
    <text evidence="3">Belongs to the Cold-regulated 413 protein family.</text>
</comment>